<organism>
    <name type="scientific">Rhodococcus jostii (strain RHA1)</name>
    <dbReference type="NCBI Taxonomy" id="101510"/>
    <lineage>
        <taxon>Bacteria</taxon>
        <taxon>Bacillati</taxon>
        <taxon>Actinomycetota</taxon>
        <taxon>Actinomycetes</taxon>
        <taxon>Mycobacteriales</taxon>
        <taxon>Nocardiaceae</taxon>
        <taxon>Rhodococcus</taxon>
    </lineage>
</organism>
<feature type="chain" id="PRO_0000430641" description="3-[(3aS,4S,7aS)-7a-methyl-1,5-dioxo-octahydro-1H-inden-4-yl]propanoyl:CoA ligase">
    <location>
        <begin position="1"/>
        <end position="515"/>
    </location>
</feature>
<feature type="binding site" evidence="1">
    <location>
        <begin position="185"/>
        <end position="193"/>
    </location>
    <ligand>
        <name>ATP</name>
        <dbReference type="ChEBI" id="CHEBI:30616"/>
    </ligand>
</feature>
<feature type="binding site" evidence="1">
    <location>
        <position position="398"/>
    </location>
    <ligand>
        <name>ATP</name>
        <dbReference type="ChEBI" id="CHEBI:30616"/>
    </ligand>
</feature>
<feature type="binding site" evidence="1">
    <location>
        <position position="413"/>
    </location>
    <ligand>
        <name>ATP</name>
        <dbReference type="ChEBI" id="CHEBI:30616"/>
    </ligand>
</feature>
<feature type="binding site" evidence="1">
    <location>
        <position position="504"/>
    </location>
    <ligand>
        <name>ATP</name>
        <dbReference type="ChEBI" id="CHEBI:30616"/>
    </ligand>
</feature>
<keyword id="KW-0067">ATP-binding</keyword>
<keyword id="KW-0153">Cholesterol metabolism</keyword>
<keyword id="KW-0436">Ligase</keyword>
<keyword id="KW-0443">Lipid metabolism</keyword>
<keyword id="KW-0547">Nucleotide-binding</keyword>
<keyword id="KW-0753">Steroid metabolism</keyword>
<keyword id="KW-1207">Sterol metabolism</keyword>
<name>FAD3_RHOJR</name>
<protein>
    <recommendedName>
        <fullName evidence="3">3-[(3aS,4S,7aS)-7a-methyl-1,5-dioxo-octahydro-1H-inden-4-yl]propanoyl:CoA ligase</fullName>
        <shortName evidence="3">HIP:CoA ligase</shortName>
        <ecNumber evidence="2">6.2.1.41</ecNumber>
    </recommendedName>
</protein>
<sequence length="515" mass="55543">MTEQPTTTPSALKRAAREFGELTAVADGDVRLTFTQLHDRVRDFAAALSSQDVRPGDHVAVWSPNTYHWVVAALGIHYAGATLVPINTRYTATEALDILERTKTTALVVAGNFLGTDRYASLRDESSTFDLPTVVRVPVDGGDAELPGVFDFDDFLALADEDTRAEADARAAAVSPDDVSDVMFTSGTTGRSKGVMSAHRQSVGIAQAWGECAEVTSDDNYLIINPFFHTFGYKAGFLVCLLNGATVVPMAVFDVPKVMATVHDEQITVLPGAPTIFQSILDHPDRPKYDLSSLRVAITGAAAVPVALVERMQSELSFDAVLTAYGQTEAVVVTMCRTDDDPVTVSTTSGRAIPGMEVRIGDQGEILVRGENVMLGYLDDPESTAKTIDADGWLHTGDVGTLDDRGYVDITDRLKDMYISGGFNVYPAEVENALARLDGVAESAVIGVPDERMGEVGRAYVVAKPGVTLAEDDVVAFCKERLANFKVPRSVRFVDSLPRNPSGKVMKNVLREEKK</sequence>
<evidence type="ECO:0000250" key="1"/>
<evidence type="ECO:0000269" key="2">
    <source>
    </source>
</evidence>
<evidence type="ECO:0000303" key="3">
    <source>
    </source>
</evidence>
<evidence type="ECO:0000305" key="4"/>
<evidence type="ECO:0000312" key="5">
    <source>
        <dbReference type="EMBL" id="ABG96381.1"/>
    </source>
</evidence>
<reference key="1">
    <citation type="journal article" date="2006" name="Proc. Natl. Acad. Sci. U.S.A.">
        <title>The complete genome of Rhodococcus sp. RHA1 provides insights into a catabolic powerhouse.</title>
        <authorList>
            <person name="McLeod M.P."/>
            <person name="Warren R.L."/>
            <person name="Hsiao W.W.L."/>
            <person name="Araki N."/>
            <person name="Myhre M."/>
            <person name="Fernandes C."/>
            <person name="Miyazawa D."/>
            <person name="Wong W."/>
            <person name="Lillquist A.L."/>
            <person name="Wang D."/>
            <person name="Dosanjh M."/>
            <person name="Hara H."/>
            <person name="Petrescu A."/>
            <person name="Morin R.D."/>
            <person name="Yang G."/>
            <person name="Stott J.M."/>
            <person name="Schein J.E."/>
            <person name="Shin H."/>
            <person name="Smailus D."/>
            <person name="Siddiqui A.S."/>
            <person name="Marra M.A."/>
            <person name="Jones S.J.M."/>
            <person name="Holt R."/>
            <person name="Brinkman F.S.L."/>
            <person name="Miyauchi K."/>
            <person name="Fukuda M."/>
            <person name="Davies J.E."/>
            <person name="Mohn W.W."/>
            <person name="Eltis L.D."/>
        </authorList>
    </citation>
    <scope>NUCLEOTIDE SEQUENCE [LARGE SCALE GENOMIC DNA]</scope>
    <source>
        <strain>RHA1</strain>
    </source>
</reference>
<reference key="2">
    <citation type="journal article" date="2013" name="Mol. Microbiol.">
        <title>FadD3 is an acyl-CoA synthetase that initiates catabolism of cholesterol rings C and D in actinobacteria.</title>
        <authorList>
            <person name="Casabon I."/>
            <person name="Crowe A.M."/>
            <person name="Liu J."/>
            <person name="Eltis L.D."/>
        </authorList>
    </citation>
    <scope>FUNCTION</scope>
    <scope>CATALYTIC ACTIVITY</scope>
    <scope>DISRUPTION PHENOTYPE</scope>
    <source>
        <strain>RHA1</strain>
    </source>
</reference>
<proteinExistence type="evidence at protein level"/>
<dbReference type="EC" id="6.2.1.41" evidence="2"/>
<dbReference type="EMBL" id="CP000431">
    <property type="protein sequence ID" value="ABG96381.1"/>
    <property type="molecule type" value="Genomic_DNA"/>
</dbReference>
<dbReference type="RefSeq" id="WP_011596962.1">
    <property type="nucleotide sequence ID" value="NC_008268.1"/>
</dbReference>
<dbReference type="SMR" id="Q0S7V5"/>
<dbReference type="KEGG" id="rha:RHA1_ro04595"/>
<dbReference type="PATRIC" id="fig|101510.16.peg.4634"/>
<dbReference type="eggNOG" id="COG0318">
    <property type="taxonomic scope" value="Bacteria"/>
</dbReference>
<dbReference type="HOGENOM" id="CLU_000022_59_7_11"/>
<dbReference type="OrthoDB" id="9803968at2"/>
<dbReference type="BioCyc" id="MetaCyc:MONOMER-18451"/>
<dbReference type="Proteomes" id="UP000008710">
    <property type="component" value="Chromosome"/>
</dbReference>
<dbReference type="GO" id="GO:0005524">
    <property type="term" value="F:ATP binding"/>
    <property type="evidence" value="ECO:0007669"/>
    <property type="project" value="UniProtKB-KW"/>
</dbReference>
<dbReference type="GO" id="GO:0031956">
    <property type="term" value="F:medium-chain fatty acid-CoA ligase activity"/>
    <property type="evidence" value="ECO:0007669"/>
    <property type="project" value="TreeGrafter"/>
</dbReference>
<dbReference type="GO" id="GO:0008203">
    <property type="term" value="P:cholesterol metabolic process"/>
    <property type="evidence" value="ECO:0007669"/>
    <property type="project" value="UniProtKB-KW"/>
</dbReference>
<dbReference type="GO" id="GO:0006631">
    <property type="term" value="P:fatty acid metabolic process"/>
    <property type="evidence" value="ECO:0007669"/>
    <property type="project" value="TreeGrafter"/>
</dbReference>
<dbReference type="CDD" id="cd17638">
    <property type="entry name" value="FadD3"/>
    <property type="match status" value="1"/>
</dbReference>
<dbReference type="FunFam" id="3.30.300.30:FF:000008">
    <property type="entry name" value="2,3-dihydroxybenzoate-AMP ligase"/>
    <property type="match status" value="1"/>
</dbReference>
<dbReference type="Gene3D" id="3.30.300.30">
    <property type="match status" value="1"/>
</dbReference>
<dbReference type="Gene3D" id="3.40.50.12780">
    <property type="entry name" value="N-terminal domain of ligase-like"/>
    <property type="match status" value="1"/>
</dbReference>
<dbReference type="InterPro" id="IPR025110">
    <property type="entry name" value="AMP-bd_C"/>
</dbReference>
<dbReference type="InterPro" id="IPR045851">
    <property type="entry name" value="AMP-bd_C_sf"/>
</dbReference>
<dbReference type="InterPro" id="IPR020845">
    <property type="entry name" value="AMP-binding_CS"/>
</dbReference>
<dbReference type="InterPro" id="IPR000873">
    <property type="entry name" value="AMP-dep_synth/lig_dom"/>
</dbReference>
<dbReference type="InterPro" id="IPR042099">
    <property type="entry name" value="ANL_N_sf"/>
</dbReference>
<dbReference type="NCBIfam" id="NF005801">
    <property type="entry name" value="PRK07656.1"/>
    <property type="match status" value="1"/>
</dbReference>
<dbReference type="PANTHER" id="PTHR43201">
    <property type="entry name" value="ACYL-COA SYNTHETASE"/>
    <property type="match status" value="1"/>
</dbReference>
<dbReference type="PANTHER" id="PTHR43201:SF5">
    <property type="entry name" value="MEDIUM-CHAIN ACYL-COA LIGASE ACSF2, MITOCHONDRIAL"/>
    <property type="match status" value="1"/>
</dbReference>
<dbReference type="Pfam" id="PF00501">
    <property type="entry name" value="AMP-binding"/>
    <property type="match status" value="1"/>
</dbReference>
<dbReference type="Pfam" id="PF13193">
    <property type="entry name" value="AMP-binding_C"/>
    <property type="match status" value="1"/>
</dbReference>
<dbReference type="SUPFAM" id="SSF56801">
    <property type="entry name" value="Acetyl-CoA synthetase-like"/>
    <property type="match status" value="1"/>
</dbReference>
<dbReference type="PROSITE" id="PS00455">
    <property type="entry name" value="AMP_BINDING"/>
    <property type="match status" value="1"/>
</dbReference>
<comment type="function">
    <text evidence="2">Involved in the catabolism of the rings C and D of cholesterol. Catalyzes the ATP-dependent CoA thioesterification of 3aalpha-H-4alpha(3'-propanoate)-7abeta-methylhexahydro-1,5-indanedione (HIP).</text>
</comment>
<comment type="catalytic activity">
    <reaction evidence="2">
        <text>3-[(3aS,4S,7aS)-7a-methyl-1,5-dioxo-octahydro-1H-inden-4-yl]propanoate + ATP + CoA = 3-[(3aS,4S,7aS)-7a-methyl-1,5-dioxo-octahydro-1H-inden-4-yl]propanoyl-CoA + AMP + diphosphate</text>
        <dbReference type="Rhea" id="RHEA:41640"/>
        <dbReference type="ChEBI" id="CHEBI:30616"/>
        <dbReference type="ChEBI" id="CHEBI:33019"/>
        <dbReference type="ChEBI" id="CHEBI:57287"/>
        <dbReference type="ChEBI" id="CHEBI:63692"/>
        <dbReference type="ChEBI" id="CHEBI:78357"/>
        <dbReference type="ChEBI" id="CHEBI:456215"/>
        <dbReference type="EC" id="6.2.1.41"/>
    </reaction>
</comment>
<comment type="disruption phenotype">
    <text evidence="2">Cells lacking this gene completely degrade cholesterol to half the yield of wild-type and accumulate HIP.</text>
</comment>
<comment type="similarity">
    <text evidence="4">Belongs to the ATP-dependent AMP-binding enzyme family.</text>
</comment>
<accession>Q0S7V5</accession>
<gene>
    <name evidence="3" type="primary">fadD3</name>
    <name evidence="5" type="ordered locus">RHA1_ro04595</name>
</gene>